<name>RL37_SOLLC</name>
<reference key="1">
    <citation type="journal article" date="1995" name="Plant Physiol. Biochem.">
        <title>A tomato cDNA encodes a protein homologous to the eukaryotic ribosomal protein S25.</title>
        <authorList>
            <person name="Werner R."/>
            <person name="Guitton M.C."/>
            <person name="Muehlbach H.P."/>
        </authorList>
    </citation>
    <scope>NUCLEOTIDE SEQUENCE [MRNA]</scope>
    <source>
        <strain>cv. Rutgers</strain>
        <tissue>Leaf</tissue>
    </source>
</reference>
<organism>
    <name type="scientific">Solanum lycopersicum</name>
    <name type="common">Tomato</name>
    <name type="synonym">Lycopersicon esculentum</name>
    <dbReference type="NCBI Taxonomy" id="4081"/>
    <lineage>
        <taxon>Eukaryota</taxon>
        <taxon>Viridiplantae</taxon>
        <taxon>Streptophyta</taxon>
        <taxon>Embryophyta</taxon>
        <taxon>Tracheophyta</taxon>
        <taxon>Spermatophyta</taxon>
        <taxon>Magnoliopsida</taxon>
        <taxon>eudicotyledons</taxon>
        <taxon>Gunneridae</taxon>
        <taxon>Pentapetalae</taxon>
        <taxon>asterids</taxon>
        <taxon>lamiids</taxon>
        <taxon>Solanales</taxon>
        <taxon>Solanaceae</taxon>
        <taxon>Solanoideae</taxon>
        <taxon>Solaneae</taxon>
        <taxon>Solanum</taxon>
        <taxon>Solanum subgen. Lycopersicon</taxon>
    </lineage>
</organism>
<comment type="function">
    <text evidence="1">Binds to the 23S rRNA.</text>
</comment>
<comment type="cofactor">
    <cofactor evidence="1">
        <name>Zn(2+)</name>
        <dbReference type="ChEBI" id="CHEBI:29105"/>
    </cofactor>
    <text evidence="1">Binds 1 zinc ion per subunit.</text>
</comment>
<comment type="similarity">
    <text evidence="3">Belongs to the eukaryotic ribosomal protein eL37 family.</text>
</comment>
<sequence length="64" mass="7262">GRCSACAYPAARLRKYNWSVKALRRKTTGTGRMRYLRNVPRRFKTNFREGTEAAPRKKGTAAAS</sequence>
<evidence type="ECO:0000250" key="1"/>
<evidence type="ECO:0000255" key="2"/>
<evidence type="ECO:0000305" key="3"/>
<protein>
    <recommendedName>
        <fullName evidence="3">Large ribosomal subunit protein eL37</fullName>
    </recommendedName>
    <alternativeName>
        <fullName>60S ribosomal protein L37</fullName>
    </alternativeName>
</protein>
<proteinExistence type="evidence at transcript level"/>
<accession>P49212</accession>
<dbReference type="EMBL" id="X79074">
    <property type="protein sequence ID" value="CAA55674.1"/>
    <property type="molecule type" value="mRNA"/>
</dbReference>
<dbReference type="PIR" id="S44313">
    <property type="entry name" value="S44313"/>
</dbReference>
<dbReference type="SMR" id="P49212"/>
<dbReference type="STRING" id="4081.P49212"/>
<dbReference type="PaxDb" id="4081-Solyc08g068180.2.1"/>
<dbReference type="eggNOG" id="KOG3475">
    <property type="taxonomic scope" value="Eukaryota"/>
</dbReference>
<dbReference type="InParanoid" id="P49212"/>
<dbReference type="Proteomes" id="UP000004994">
    <property type="component" value="Unplaced"/>
</dbReference>
<dbReference type="ExpressionAtlas" id="P49212">
    <property type="expression patterns" value="baseline and differential"/>
</dbReference>
<dbReference type="GO" id="GO:0022625">
    <property type="term" value="C:cytosolic large ribosomal subunit"/>
    <property type="evidence" value="ECO:0000318"/>
    <property type="project" value="GO_Central"/>
</dbReference>
<dbReference type="GO" id="GO:0003723">
    <property type="term" value="F:RNA binding"/>
    <property type="evidence" value="ECO:0000318"/>
    <property type="project" value="GO_Central"/>
</dbReference>
<dbReference type="GO" id="GO:0019843">
    <property type="term" value="F:rRNA binding"/>
    <property type="evidence" value="ECO:0007669"/>
    <property type="project" value="UniProtKB-KW"/>
</dbReference>
<dbReference type="GO" id="GO:0003735">
    <property type="term" value="F:structural constituent of ribosome"/>
    <property type="evidence" value="ECO:0007669"/>
    <property type="project" value="InterPro"/>
</dbReference>
<dbReference type="GO" id="GO:0008270">
    <property type="term" value="F:zinc ion binding"/>
    <property type="evidence" value="ECO:0007669"/>
    <property type="project" value="UniProtKB-KW"/>
</dbReference>
<dbReference type="GO" id="GO:0006412">
    <property type="term" value="P:translation"/>
    <property type="evidence" value="ECO:0007669"/>
    <property type="project" value="InterPro"/>
</dbReference>
<dbReference type="Gene3D" id="2.20.25.30">
    <property type="match status" value="1"/>
</dbReference>
<dbReference type="InterPro" id="IPR001569">
    <property type="entry name" value="Ribosomal_eL37"/>
</dbReference>
<dbReference type="InterPro" id="IPR011331">
    <property type="entry name" value="Ribosomal_eL37/eL43"/>
</dbReference>
<dbReference type="InterPro" id="IPR011332">
    <property type="entry name" value="Ribosomal_zn-bd"/>
</dbReference>
<dbReference type="PANTHER" id="PTHR10768">
    <property type="entry name" value="60S RIBOSOMAL PROTEIN L37"/>
    <property type="match status" value="1"/>
</dbReference>
<dbReference type="PANTHER" id="PTHR10768:SF43">
    <property type="entry name" value="RIBOSOMAL PROTEIN L37"/>
    <property type="match status" value="1"/>
</dbReference>
<dbReference type="Pfam" id="PF01907">
    <property type="entry name" value="Ribosomal_L37e"/>
    <property type="match status" value="1"/>
</dbReference>
<dbReference type="SUPFAM" id="SSF57829">
    <property type="entry name" value="Zn-binding ribosomal proteins"/>
    <property type="match status" value="1"/>
</dbReference>
<feature type="chain" id="PRO_0000139717" description="Large ribosomal subunit protein eL37">
    <location>
        <begin position="1" status="less than"/>
        <end position="64"/>
    </location>
</feature>
<feature type="zinc finger region" description="C4-type" evidence="2">
    <location>
        <begin position="1" status="less than"/>
        <end position="6"/>
    </location>
</feature>
<feature type="binding site" evidence="1">
    <location>
        <position position="3"/>
    </location>
    <ligand>
        <name>Zn(2+)</name>
        <dbReference type="ChEBI" id="CHEBI:29105"/>
    </ligand>
</feature>
<feature type="binding site" evidence="1">
    <location>
        <position position="6"/>
    </location>
    <ligand>
        <name>Zn(2+)</name>
        <dbReference type="ChEBI" id="CHEBI:29105"/>
    </ligand>
</feature>
<feature type="non-terminal residue">
    <location>
        <position position="1"/>
    </location>
</feature>
<gene>
    <name type="primary">RPL37</name>
</gene>
<keyword id="KW-0479">Metal-binding</keyword>
<keyword id="KW-1185">Reference proteome</keyword>
<keyword id="KW-0687">Ribonucleoprotein</keyword>
<keyword id="KW-0689">Ribosomal protein</keyword>
<keyword id="KW-0694">RNA-binding</keyword>
<keyword id="KW-0699">rRNA-binding</keyword>
<keyword id="KW-0862">Zinc</keyword>
<keyword id="KW-0863">Zinc-finger</keyword>